<dbReference type="EC" id="3.4.23.43" evidence="1"/>
<dbReference type="EC" id="2.1.1.-" evidence="1"/>
<dbReference type="EMBL" id="M32613">
    <property type="protein sequence ID" value="AAA25137.1"/>
    <property type="molecule type" value="Genomic_DNA"/>
</dbReference>
<dbReference type="EMBL" id="X52462">
    <property type="protein sequence ID" value="CAA36700.1"/>
    <property type="molecule type" value="Genomic_DNA"/>
</dbReference>
<dbReference type="PIR" id="S11803">
    <property type="entry name" value="S11803"/>
</dbReference>
<dbReference type="MEROPS" id="A24.A10"/>
<dbReference type="TCDB" id="3.A.15.1.1">
    <property type="family name" value="the outer membrane protein secreting main terminal branch (mtb) family"/>
</dbReference>
<dbReference type="GO" id="GO:0005886">
    <property type="term" value="C:plasma membrane"/>
    <property type="evidence" value="ECO:0007669"/>
    <property type="project" value="UniProtKB-SubCell"/>
</dbReference>
<dbReference type="GO" id="GO:0004190">
    <property type="term" value="F:aspartic-type endopeptidase activity"/>
    <property type="evidence" value="ECO:0007669"/>
    <property type="project" value="UniProtKB-EC"/>
</dbReference>
<dbReference type="GO" id="GO:0008168">
    <property type="term" value="F:methyltransferase activity"/>
    <property type="evidence" value="ECO:0007669"/>
    <property type="project" value="UniProtKB-KW"/>
</dbReference>
<dbReference type="GO" id="GO:0032259">
    <property type="term" value="P:methylation"/>
    <property type="evidence" value="ECO:0007669"/>
    <property type="project" value="UniProtKB-KW"/>
</dbReference>
<dbReference type="GO" id="GO:0006465">
    <property type="term" value="P:signal peptide processing"/>
    <property type="evidence" value="ECO:0007669"/>
    <property type="project" value="TreeGrafter"/>
</dbReference>
<dbReference type="Gene3D" id="1.20.120.1220">
    <property type="match status" value="1"/>
</dbReference>
<dbReference type="InterPro" id="IPR014032">
    <property type="entry name" value="Peptidase_A24A_bac"/>
</dbReference>
<dbReference type="InterPro" id="IPR000045">
    <property type="entry name" value="Prepilin_IV_endopep_pep"/>
</dbReference>
<dbReference type="InterPro" id="IPR010627">
    <property type="entry name" value="Prepilin_pept_A24_N"/>
</dbReference>
<dbReference type="InterPro" id="IPR050882">
    <property type="entry name" value="Prepilin_peptidase/N-MTase"/>
</dbReference>
<dbReference type="PANTHER" id="PTHR30487:SF0">
    <property type="entry name" value="PREPILIN LEADER PEPTIDASE_N-METHYLTRANSFERASE-RELATED"/>
    <property type="match status" value="1"/>
</dbReference>
<dbReference type="PANTHER" id="PTHR30487">
    <property type="entry name" value="TYPE 4 PREPILIN-LIKE PROTEINS LEADER PEPTIDE-PROCESSING ENZYME"/>
    <property type="match status" value="1"/>
</dbReference>
<dbReference type="Pfam" id="PF06750">
    <property type="entry name" value="A24_N_bact"/>
    <property type="match status" value="1"/>
</dbReference>
<dbReference type="Pfam" id="PF01478">
    <property type="entry name" value="Peptidase_A24"/>
    <property type="match status" value="1"/>
</dbReference>
<dbReference type="PRINTS" id="PR00864">
    <property type="entry name" value="PREPILNPTASE"/>
</dbReference>
<gene>
    <name type="primary">pulO</name>
</gene>
<evidence type="ECO:0000250" key="1">
    <source>
        <dbReference type="UniProtKB" id="P22610"/>
    </source>
</evidence>
<evidence type="ECO:0000255" key="2"/>
<evidence type="ECO:0000305" key="3"/>
<proteinExistence type="inferred from homology"/>
<sequence>MVENIALLPEFAAQYPFLWGSFLFLSGLAFGSFFNVVIHRLPLMMEQAEGINLCFPASFCPQCREPIAWRDNIPLLGFLFLKGRSRCCGQPISPRYPLMELATGALFVLAGYLMAPGVPLLGGLILLSLLLILAAIDAQTQLLPDGLTLPLMWAGLLFNLSATYVPLAEAVVGAMAGYLSLWSVYWVFRLLSGKEALGYGDFKLLAALGAWLGWQALPQTLLLASPAA</sequence>
<comment type="function">
    <text evidence="1">Plays an essential role in type IV pili and type II pseudopili formation by proteolytically removing the leader sequence from substrate proteins and subsequently monomethylating the alpha-amino group of the newly exposed N-terminal phenylalanine.</text>
</comment>
<comment type="catalytic activity">
    <reaction evidence="1">
        <text>Typically cleaves a -Gly-|-Phe- bond to release an N-terminal, basic peptide of 5-8 residues from type IV prepilin, and then N-methylates the new N-terminal amino group, the methyl donor being S-adenosyl-L-methionine.</text>
        <dbReference type="EC" id="3.4.23.43"/>
    </reaction>
</comment>
<comment type="subcellular location">
    <subcellularLocation>
        <location evidence="1">Cell inner membrane</location>
        <topology evidence="1">Multi-pass membrane protein</topology>
    </subcellularLocation>
</comment>
<comment type="similarity">
    <text evidence="3">Belongs to the peptidase A24 family.</text>
</comment>
<reference key="1">
    <citation type="journal article" date="1990" name="Mol. Microbiol.">
        <title>Five genes at the 3' end of the Klebsiella pneumoniae pulC operon are required for pullulanase secretion.</title>
        <authorList>
            <person name="Pugsley A.P."/>
            <person name="Reyss I."/>
        </authorList>
    </citation>
    <scope>NUCLEOTIDE SEQUENCE [GENOMIC DNA]</scope>
    <source>
        <strain>UNF 5023</strain>
    </source>
</reference>
<name>LEP4_KLEPN</name>
<protein>
    <recommendedName>
        <fullName>Prepilin leader peptidase/N-methyltransferase</fullName>
    </recommendedName>
    <alternativeName>
        <fullName>Pullulanase secretion protein PulO</fullName>
    </alternativeName>
    <domain>
        <recommendedName>
            <fullName>Leader peptidase</fullName>
            <ecNumber evidence="1">3.4.23.43</ecNumber>
        </recommendedName>
        <alternativeName>
            <fullName>Prepilin peptidase</fullName>
        </alternativeName>
    </domain>
    <domain>
        <recommendedName>
            <fullName>N-methyltransferase</fullName>
            <ecNumber evidence="1">2.1.1.-</ecNumber>
        </recommendedName>
    </domain>
</protein>
<feature type="chain" id="PRO_0000192621" description="Prepilin leader peptidase/N-methyltransferase">
    <location>
        <begin position="1"/>
        <end position="228"/>
    </location>
</feature>
<feature type="transmembrane region" description="Helical" evidence="2">
    <location>
        <begin position="18"/>
        <end position="38"/>
    </location>
</feature>
<feature type="transmembrane region" description="Helical" evidence="2">
    <location>
        <begin position="95"/>
        <end position="115"/>
    </location>
</feature>
<feature type="transmembrane region" description="Helical" evidence="2">
    <location>
        <begin position="116"/>
        <end position="136"/>
    </location>
</feature>
<feature type="transmembrane region" description="Helical" evidence="2">
    <location>
        <begin position="147"/>
        <end position="167"/>
    </location>
</feature>
<feature type="transmembrane region" description="Helical" evidence="2">
    <location>
        <begin position="168"/>
        <end position="188"/>
    </location>
</feature>
<feature type="transmembrane region" description="Helical" evidence="2">
    <location>
        <begin position="204"/>
        <end position="224"/>
    </location>
</feature>
<organism>
    <name type="scientific">Klebsiella pneumoniae</name>
    <dbReference type="NCBI Taxonomy" id="573"/>
    <lineage>
        <taxon>Bacteria</taxon>
        <taxon>Pseudomonadati</taxon>
        <taxon>Pseudomonadota</taxon>
        <taxon>Gammaproteobacteria</taxon>
        <taxon>Enterobacterales</taxon>
        <taxon>Enterobacteriaceae</taxon>
        <taxon>Klebsiella/Raoultella group</taxon>
        <taxon>Klebsiella</taxon>
        <taxon>Klebsiella pneumoniae complex</taxon>
    </lineage>
</organism>
<keyword id="KW-0997">Cell inner membrane</keyword>
<keyword id="KW-1003">Cell membrane</keyword>
<keyword id="KW-0378">Hydrolase</keyword>
<keyword id="KW-0472">Membrane</keyword>
<keyword id="KW-0489">Methyltransferase</keyword>
<keyword id="KW-0511">Multifunctional enzyme</keyword>
<keyword id="KW-0645">Protease</keyword>
<keyword id="KW-0949">S-adenosyl-L-methionine</keyword>
<keyword id="KW-0808">Transferase</keyword>
<keyword id="KW-0812">Transmembrane</keyword>
<keyword id="KW-1133">Transmembrane helix</keyword>
<accession>P15754</accession>